<name>NS2A_CVBQ</name>
<feature type="chain" id="PRO_0000106059" description="Non-structural protein 2a">
    <location>
        <begin position="1"/>
        <end position="277"/>
    </location>
</feature>
<evidence type="ECO:0000305" key="1"/>
<sequence>MAVAYADKPNHFINFPLTQFEGFVLNYKGLQFQLLDEGVDCKIQTAPHISLAMLDIQPEDYRSVDVAIQEVIDDMHWGEGFQIKFDNPHILGRCIVLDVKGVEELHDDLVNYIRDKGCVADQSRKWIGHCTIAQLTDAALSIKENVDFINSMQFNYKITINPSSPARLEIVKLGAEKKDGFYETIVSHWMGSRFEYNPPTDKLAMIMGYCCSEVVRKELEEGDLPENDDDAWFKLSYHYENNSWFFRHVYRKVLISVSLVNLDCNCLGFYESPVEED</sequence>
<reference key="1">
    <citation type="journal article" date="1989" name="Nucleic Acids Res.">
        <title>The sequence of cDNA of bovine coronavirus 32K nonstructural gene.</title>
        <authorList>
            <person name="Cox G.J."/>
            <person name="Parker M.D."/>
            <person name="Babiuk L.A."/>
        </authorList>
    </citation>
    <scope>NUCLEOTIDE SEQUENCE [GENOMIC RNA]</scope>
</reference>
<reference key="2">
    <citation type="journal article" date="2001" name="Adv. Exp. Med. Biol.">
        <title>Full-length genomic sequence of bovine coronavirus (31 kb). Completion of the open reading frame 1a/1b sequences.</title>
        <authorList>
            <person name="Yoo D."/>
            <person name="Pei Y."/>
        </authorList>
    </citation>
    <scope>NUCLEOTIDE SEQUENCE [GENOMIC RNA]</scope>
</reference>
<proteinExistence type="inferred from homology"/>
<organism>
    <name type="scientific">Bovine coronavirus (strain Quebec)</name>
    <name type="common">BCoV</name>
    <name type="synonym">BCV</name>
    <dbReference type="NCBI Taxonomy" id="11133"/>
    <lineage>
        <taxon>Viruses</taxon>
        <taxon>Riboviria</taxon>
        <taxon>Orthornavirae</taxon>
        <taxon>Pisuviricota</taxon>
        <taxon>Pisoniviricetes</taxon>
        <taxon>Nidovirales</taxon>
        <taxon>Cornidovirineae</taxon>
        <taxon>Coronaviridae</taxon>
        <taxon>Orthocoronavirinae</taxon>
        <taxon>Betacoronavirus</taxon>
        <taxon>Embecovirus</taxon>
        <taxon>Betacoronavirus 1</taxon>
    </lineage>
</organism>
<dbReference type="EMBL" id="X15445">
    <property type="protein sequence ID" value="CAA33485.1"/>
    <property type="molecule type" value="Genomic_RNA"/>
</dbReference>
<dbReference type="EMBL" id="AF220295">
    <property type="protein sequence ID" value="AAL40398.1"/>
    <property type="status" value="ALT_FRAME"/>
    <property type="molecule type" value="Genomic_RNA"/>
</dbReference>
<dbReference type="PIR" id="A34039">
    <property type="entry name" value="MNIH32"/>
</dbReference>
<dbReference type="SMR" id="P18517"/>
<dbReference type="Proteomes" id="UP000008572">
    <property type="component" value="Genome"/>
</dbReference>
<dbReference type="Gene3D" id="3.90.1140.10">
    <property type="entry name" value="Cyclic phosphodiesterase"/>
    <property type="match status" value="1"/>
</dbReference>
<dbReference type="InterPro" id="IPR007878">
    <property type="entry name" value="Coronavirus_NS2A"/>
</dbReference>
<dbReference type="InterPro" id="IPR039573">
    <property type="entry name" value="NS2A-like"/>
</dbReference>
<dbReference type="Pfam" id="PF05213">
    <property type="entry name" value="Corona_NS2A"/>
    <property type="match status" value="1"/>
</dbReference>
<dbReference type="PIRSF" id="PIRSF003890">
    <property type="entry name" value="LigT_coronavirus"/>
    <property type="match status" value="1"/>
</dbReference>
<organismHost>
    <name type="scientific">Bos taurus</name>
    <name type="common">Bovine</name>
    <dbReference type="NCBI Taxonomy" id="9913"/>
</organismHost>
<accession>P18517</accession>
<accession>Q8V6W5</accession>
<comment type="similarity">
    <text evidence="1">Belongs to the coronaviruses ns2a protein family.</text>
</comment>
<comment type="sequence caution" evidence="1">
    <conflict type="frameshift">
        <sequence resource="EMBL-CDS" id="AAL40398"/>
    </conflict>
</comment>
<gene>
    <name type="ORF">2a</name>
</gene>
<protein>
    <recommendedName>
        <fullName>Non-structural protein 2a</fullName>
        <shortName>ns2a</shortName>
    </recommendedName>
    <alternativeName>
        <fullName>32 kDa accessory protein</fullName>
    </alternativeName>
    <alternativeName>
        <fullName>32 kDa non-structural protein</fullName>
    </alternativeName>
    <alternativeName>
        <fullName>ns2</fullName>
    </alternativeName>
</protein>